<comment type="function">
    <text evidence="1">One of the primary rRNA binding proteins, it binds directly to 16S rRNA where it nucleates assembly of the body of the 30S subunit.</text>
</comment>
<comment type="function">
    <text evidence="1">With S5 and S12 plays an important role in translational accuracy.</text>
</comment>
<comment type="subunit">
    <text evidence="1">Part of the 30S ribosomal subunit. Contacts protein S5. The interaction surface between S4 and S5 is involved in control of translational fidelity (By similarity).</text>
</comment>
<comment type="subcellular location">
    <subcellularLocation>
        <location>Plastid</location>
        <location>Chloroplast</location>
    </subcellularLocation>
</comment>
<comment type="similarity">
    <text evidence="2">Belongs to the universal ribosomal protein uS4 family.</text>
</comment>
<protein>
    <recommendedName>
        <fullName evidence="2">Small ribosomal subunit protein uS4c</fullName>
    </recommendedName>
    <alternativeName>
        <fullName>30S ribosomal protein S4, chloroplastic</fullName>
    </alternativeName>
</protein>
<gene>
    <name type="primary">rps4</name>
</gene>
<dbReference type="EMBL" id="DQ396875">
    <property type="protein sequence ID" value="ABD48272.1"/>
    <property type="molecule type" value="Genomic_DNA"/>
</dbReference>
<dbReference type="RefSeq" id="YP_635989.1">
    <property type="nucleotide sequence ID" value="NC_008101.1"/>
</dbReference>
<dbReference type="SMR" id="Q1KVT5"/>
<dbReference type="GeneID" id="4099807"/>
<dbReference type="GO" id="GO:0009507">
    <property type="term" value="C:chloroplast"/>
    <property type="evidence" value="ECO:0007669"/>
    <property type="project" value="UniProtKB-SubCell"/>
</dbReference>
<dbReference type="GO" id="GO:0015935">
    <property type="term" value="C:small ribosomal subunit"/>
    <property type="evidence" value="ECO:0007669"/>
    <property type="project" value="InterPro"/>
</dbReference>
<dbReference type="GO" id="GO:0019843">
    <property type="term" value="F:rRNA binding"/>
    <property type="evidence" value="ECO:0007669"/>
    <property type="project" value="UniProtKB-UniRule"/>
</dbReference>
<dbReference type="GO" id="GO:0003735">
    <property type="term" value="F:structural constituent of ribosome"/>
    <property type="evidence" value="ECO:0007669"/>
    <property type="project" value="InterPro"/>
</dbReference>
<dbReference type="GO" id="GO:0042274">
    <property type="term" value="P:ribosomal small subunit biogenesis"/>
    <property type="evidence" value="ECO:0007669"/>
    <property type="project" value="TreeGrafter"/>
</dbReference>
<dbReference type="GO" id="GO:0006412">
    <property type="term" value="P:translation"/>
    <property type="evidence" value="ECO:0007669"/>
    <property type="project" value="UniProtKB-UniRule"/>
</dbReference>
<dbReference type="CDD" id="cd00165">
    <property type="entry name" value="S4"/>
    <property type="match status" value="2"/>
</dbReference>
<dbReference type="FunFam" id="3.10.290.10:FF:000001">
    <property type="entry name" value="30S ribosomal protein S4"/>
    <property type="match status" value="1"/>
</dbReference>
<dbReference type="Gene3D" id="1.10.1050.10">
    <property type="entry name" value="Ribosomal Protein S4 Delta 41, Chain A, domain 1"/>
    <property type="match status" value="1"/>
</dbReference>
<dbReference type="Gene3D" id="3.10.290.10">
    <property type="entry name" value="RNA-binding S4 domain"/>
    <property type="match status" value="2"/>
</dbReference>
<dbReference type="HAMAP" id="MF_01306_B">
    <property type="entry name" value="Ribosomal_uS4_B"/>
    <property type="match status" value="1"/>
</dbReference>
<dbReference type="InterPro" id="IPR022801">
    <property type="entry name" value="Ribosomal_uS4"/>
</dbReference>
<dbReference type="InterPro" id="IPR005709">
    <property type="entry name" value="Ribosomal_uS4_bac-type"/>
</dbReference>
<dbReference type="InterPro" id="IPR018079">
    <property type="entry name" value="Ribosomal_uS4_CS"/>
</dbReference>
<dbReference type="InterPro" id="IPR001912">
    <property type="entry name" value="Ribosomal_uS4_N"/>
</dbReference>
<dbReference type="InterPro" id="IPR002942">
    <property type="entry name" value="S4_RNA-bd"/>
</dbReference>
<dbReference type="InterPro" id="IPR036986">
    <property type="entry name" value="S4_RNA-bd_sf"/>
</dbReference>
<dbReference type="NCBIfam" id="NF003717">
    <property type="entry name" value="PRK05327.1"/>
    <property type="match status" value="1"/>
</dbReference>
<dbReference type="PANTHER" id="PTHR11831">
    <property type="entry name" value="30S 40S RIBOSOMAL PROTEIN"/>
    <property type="match status" value="1"/>
</dbReference>
<dbReference type="PANTHER" id="PTHR11831:SF4">
    <property type="entry name" value="SMALL RIBOSOMAL SUBUNIT PROTEIN US4M"/>
    <property type="match status" value="1"/>
</dbReference>
<dbReference type="Pfam" id="PF00163">
    <property type="entry name" value="Ribosomal_S4"/>
    <property type="match status" value="1"/>
</dbReference>
<dbReference type="Pfam" id="PF01479">
    <property type="entry name" value="S4"/>
    <property type="match status" value="2"/>
</dbReference>
<dbReference type="SMART" id="SM01390">
    <property type="entry name" value="Ribosomal_S4"/>
    <property type="match status" value="1"/>
</dbReference>
<dbReference type="SMART" id="SM00363">
    <property type="entry name" value="S4"/>
    <property type="match status" value="2"/>
</dbReference>
<dbReference type="SUPFAM" id="SSF55174">
    <property type="entry name" value="Alpha-L RNA-binding motif"/>
    <property type="match status" value="2"/>
</dbReference>
<dbReference type="PROSITE" id="PS00632">
    <property type="entry name" value="RIBOSOMAL_S4"/>
    <property type="match status" value="1"/>
</dbReference>
<dbReference type="PROSITE" id="PS50889">
    <property type="entry name" value="S4"/>
    <property type="match status" value="2"/>
</dbReference>
<feature type="chain" id="PRO_0000277020" description="Small ribosomal subunit protein uS4c">
    <location>
        <begin position="1"/>
        <end position="251"/>
    </location>
</feature>
<feature type="domain" description="S4 RNA-binding 1">
    <location>
        <begin position="110"/>
        <end position="170"/>
    </location>
</feature>
<feature type="domain" description="S4 RNA-binding 2">
    <location>
        <begin position="189"/>
        <end position="251"/>
    </location>
</feature>
<geneLocation type="chloroplast"/>
<name>RR4_TETOB</name>
<evidence type="ECO:0000250" key="1"/>
<evidence type="ECO:0000305" key="2"/>
<organism>
    <name type="scientific">Tetradesmus obliquus</name>
    <name type="common">Green alga</name>
    <name type="synonym">Acutodesmus obliquus</name>
    <dbReference type="NCBI Taxonomy" id="3088"/>
    <lineage>
        <taxon>Eukaryota</taxon>
        <taxon>Viridiplantae</taxon>
        <taxon>Chlorophyta</taxon>
        <taxon>core chlorophytes</taxon>
        <taxon>Chlorophyceae</taxon>
        <taxon>CS clade</taxon>
        <taxon>Sphaeropleales</taxon>
        <taxon>Scenedesmaceae</taxon>
        <taxon>Tetradesmus</taxon>
    </lineage>
</organism>
<keyword id="KW-0150">Chloroplast</keyword>
<keyword id="KW-0934">Plastid</keyword>
<keyword id="KW-0677">Repeat</keyword>
<keyword id="KW-0687">Ribonucleoprotein</keyword>
<keyword id="KW-0689">Ribosomal protein</keyword>
<keyword id="KW-0694">RNA-binding</keyword>
<keyword id="KW-0699">rRNA-binding</keyword>
<reference key="1">
    <citation type="journal article" date="2006" name="BMC Evol. Biol.">
        <title>The complete chloroplast genome sequence of the chlorophycean green alga Scenedesmus obliquus reveals a compact gene organization and a biased distribution of genes on the two DNA strands.</title>
        <authorList>
            <person name="de Cambiaire J.-C."/>
            <person name="Otis C."/>
            <person name="Lemieux C."/>
            <person name="Turmel M."/>
        </authorList>
    </citation>
    <scope>NUCLEOTIDE SEQUENCE [LARGE SCALE GENOMIC DNA]</scope>
    <source>
        <strain>UTEX 393</strain>
    </source>
</reference>
<sequence>MSRYIGPRLRIIRRIGKLRGFTRKKPFRRSFRGRGALQGKVIPPGQHGLTKLFKSRPFDSNESDYLIRLKVKQRLRYNYGITEKQLVKYVRQAKKMKESTGQVLLQLLEMRLDNIVFRLNMAPTICAARQLISHGHIHVNSKKVNIASYMCKPKDVISVSMKQSSLKLVNRNLQEYSQKMSAYKKRLERTLAYVLFQRNISPNMANALEYINQGKVQVNNRKVLLPNYLCHSKDMISVKTDKGIRKFQFSE</sequence>
<proteinExistence type="inferred from homology"/>
<accession>Q1KVT5</accession>